<comment type="function">
    <text evidence="12">Catalyzes the formation of pyruvate in the last step of glycolysis, it is irreversible under physiological conditions. The reaction is critical for the control of metabolic flux in the second part of glycolysis.</text>
</comment>
<comment type="catalytic activity">
    <reaction>
        <text>pyruvate + ATP = phosphoenolpyruvate + ADP + H(+)</text>
        <dbReference type="Rhea" id="RHEA:18157"/>
        <dbReference type="ChEBI" id="CHEBI:15361"/>
        <dbReference type="ChEBI" id="CHEBI:15378"/>
        <dbReference type="ChEBI" id="CHEBI:30616"/>
        <dbReference type="ChEBI" id="CHEBI:58702"/>
        <dbReference type="ChEBI" id="CHEBI:456216"/>
        <dbReference type="EC" id="2.7.1.40"/>
    </reaction>
    <physiologicalReaction direction="right-to-left" evidence="5 11">
        <dbReference type="Rhea" id="RHEA:18159"/>
    </physiologicalReaction>
</comment>
<comment type="cofactor">
    <cofactor evidence="8">
        <name>Mg(2+)</name>
        <dbReference type="ChEBI" id="CHEBI:18420"/>
    </cofactor>
</comment>
<comment type="cofactor">
    <cofactor evidence="4">
        <name>K(+)</name>
        <dbReference type="ChEBI" id="CHEBI:29103"/>
    </cofactor>
</comment>
<comment type="activity regulation">
    <text evidence="8">Belongs to type I PK; fructose 1,6-bisphosphate-activated.</text>
</comment>
<comment type="pathway">
    <text>Carbohydrate degradation; glycolysis; pyruvate from D-glyceraldehyde 3-phosphate: step 5/5.</text>
</comment>
<comment type="subunit">
    <text evidence="5 7 9">Homotetramer.</text>
</comment>
<comment type="interaction">
    <interactant intactId="EBI-909449">
        <id>P0AD61</id>
    </interactant>
    <interactant intactId="EBI-909449">
        <id>P0AD61</id>
        <label>pykF</label>
    </interactant>
    <organismsDiffer>false</organismsDiffer>
    <experiments>2</experiments>
</comment>
<comment type="similarity">
    <text evidence="10">Belongs to the pyruvate kinase family.</text>
</comment>
<keyword id="KW-0002">3D-structure</keyword>
<keyword id="KW-0007">Acetylation</keyword>
<keyword id="KW-0021">Allosteric enzyme</keyword>
<keyword id="KW-0067">ATP-binding</keyword>
<keyword id="KW-0903">Direct protein sequencing</keyword>
<keyword id="KW-0324">Glycolysis</keyword>
<keyword id="KW-0418">Kinase</keyword>
<keyword id="KW-0460">Magnesium</keyword>
<keyword id="KW-0479">Metal-binding</keyword>
<keyword id="KW-0547">Nucleotide-binding</keyword>
<keyword id="KW-0630">Potassium</keyword>
<keyword id="KW-0670">Pyruvate</keyword>
<keyword id="KW-1185">Reference proteome</keyword>
<keyword id="KW-0808">Transferase</keyword>
<organism>
    <name type="scientific">Escherichia coli (strain K12)</name>
    <dbReference type="NCBI Taxonomy" id="83333"/>
    <lineage>
        <taxon>Bacteria</taxon>
        <taxon>Pseudomonadati</taxon>
        <taxon>Pseudomonadota</taxon>
        <taxon>Gammaproteobacteria</taxon>
        <taxon>Enterobacterales</taxon>
        <taxon>Enterobacteriaceae</taxon>
        <taxon>Escherichia</taxon>
    </lineage>
</organism>
<dbReference type="EC" id="2.7.1.40" evidence="8"/>
<dbReference type="EMBL" id="M24636">
    <property type="protein sequence ID" value="AAA24392.1"/>
    <property type="molecule type" value="Genomic_DNA"/>
</dbReference>
<dbReference type="EMBL" id="U68703">
    <property type="protein sequence ID" value="AAB47952.1"/>
    <property type="molecule type" value="Genomic_DNA"/>
</dbReference>
<dbReference type="EMBL" id="U00096">
    <property type="protein sequence ID" value="AAC74746.1"/>
    <property type="molecule type" value="Genomic_DNA"/>
</dbReference>
<dbReference type="EMBL" id="AP009048">
    <property type="protein sequence ID" value="BAA15445.2"/>
    <property type="molecule type" value="Genomic_DNA"/>
</dbReference>
<dbReference type="PIR" id="D64925">
    <property type="entry name" value="D64925"/>
</dbReference>
<dbReference type="RefSeq" id="NP_416191.1">
    <property type="nucleotide sequence ID" value="NC_000913.3"/>
</dbReference>
<dbReference type="RefSeq" id="WP_001295403.1">
    <property type="nucleotide sequence ID" value="NZ_STEB01000003.1"/>
</dbReference>
<dbReference type="PDB" id="1E0T">
    <property type="method" value="X-ray"/>
    <property type="resolution" value="1.80 A"/>
    <property type="chains" value="A/B/C/D=1-470"/>
</dbReference>
<dbReference type="PDB" id="1E0U">
    <property type="method" value="X-ray"/>
    <property type="resolution" value="2.80 A"/>
    <property type="chains" value="A/B/C/D=1-470"/>
</dbReference>
<dbReference type="PDB" id="1PKY">
    <property type="method" value="X-ray"/>
    <property type="resolution" value="2.50 A"/>
    <property type="chains" value="A/B/C/D=1-470"/>
</dbReference>
<dbReference type="PDB" id="4YNG">
    <property type="method" value="X-ray"/>
    <property type="resolution" value="2.28 A"/>
    <property type="chains" value="A/B/C/D/E/F/G/H=1-470"/>
</dbReference>
<dbReference type="PDB" id="8EDQ">
    <property type="method" value="X-ray"/>
    <property type="resolution" value="2.88 A"/>
    <property type="chains" value="A/B=1-470"/>
</dbReference>
<dbReference type="PDB" id="8EDR">
    <property type="method" value="X-ray"/>
    <property type="resolution" value="2.64 A"/>
    <property type="chains" value="A/B=1-470"/>
</dbReference>
<dbReference type="PDB" id="8EDS">
    <property type="method" value="X-ray"/>
    <property type="resolution" value="2.10 A"/>
    <property type="chains" value="A/B=1-470"/>
</dbReference>
<dbReference type="PDB" id="8EDT">
    <property type="method" value="X-ray"/>
    <property type="resolution" value="2.09 A"/>
    <property type="chains" value="A/B=1-470"/>
</dbReference>
<dbReference type="PDB" id="8EQ0">
    <property type="method" value="X-ray"/>
    <property type="resolution" value="2.62 A"/>
    <property type="chains" value="A/B=1-470"/>
</dbReference>
<dbReference type="PDB" id="8EQ1">
    <property type="method" value="X-ray"/>
    <property type="resolution" value="2.32 A"/>
    <property type="chains" value="A/B/C/D=1-470"/>
</dbReference>
<dbReference type="PDB" id="8EQ3">
    <property type="method" value="X-ray"/>
    <property type="resolution" value="2.01 A"/>
    <property type="chains" value="A/B=1-470"/>
</dbReference>
<dbReference type="PDB" id="8EU4">
    <property type="method" value="X-ray"/>
    <property type="resolution" value="2.10 A"/>
    <property type="chains" value="A/B/C/D/E/F/G/H=1-470"/>
</dbReference>
<dbReference type="PDBsum" id="1E0T"/>
<dbReference type="PDBsum" id="1E0U"/>
<dbReference type="PDBsum" id="1PKY"/>
<dbReference type="PDBsum" id="4YNG"/>
<dbReference type="PDBsum" id="8EDQ"/>
<dbReference type="PDBsum" id="8EDR"/>
<dbReference type="PDBsum" id="8EDS"/>
<dbReference type="PDBsum" id="8EDT"/>
<dbReference type="PDBsum" id="8EQ0"/>
<dbReference type="PDBsum" id="8EQ1"/>
<dbReference type="PDBsum" id="8EQ3"/>
<dbReference type="PDBsum" id="8EU4"/>
<dbReference type="SMR" id="P0AD61"/>
<dbReference type="BioGRID" id="4260275">
    <property type="interactions" value="62"/>
</dbReference>
<dbReference type="DIP" id="DIP-36221N"/>
<dbReference type="FunCoup" id="P0AD61">
    <property type="interactions" value="723"/>
</dbReference>
<dbReference type="IntAct" id="P0AD61">
    <property type="interactions" value="21"/>
</dbReference>
<dbReference type="STRING" id="511145.b1676"/>
<dbReference type="iPTMnet" id="P0AD61"/>
<dbReference type="jPOST" id="P0AD61"/>
<dbReference type="PaxDb" id="511145-b1676"/>
<dbReference type="EnsemblBacteria" id="AAC74746">
    <property type="protein sequence ID" value="AAC74746"/>
    <property type="gene ID" value="b1676"/>
</dbReference>
<dbReference type="GeneID" id="93775831"/>
<dbReference type="GeneID" id="946179"/>
<dbReference type="KEGG" id="ecj:JW1666"/>
<dbReference type="KEGG" id="eco:b1676"/>
<dbReference type="KEGG" id="ecoc:C3026_09605"/>
<dbReference type="PATRIC" id="fig|1411691.4.peg.582"/>
<dbReference type="EchoBASE" id="EB0797"/>
<dbReference type="eggNOG" id="COG0469">
    <property type="taxonomic scope" value="Bacteria"/>
</dbReference>
<dbReference type="HOGENOM" id="CLU_015439_0_0_6"/>
<dbReference type="InParanoid" id="P0AD61"/>
<dbReference type="OMA" id="HQGRYDR"/>
<dbReference type="OrthoDB" id="9812123at2"/>
<dbReference type="PhylomeDB" id="P0AD61"/>
<dbReference type="BioCyc" id="EcoCyc:PKI-MONOMER"/>
<dbReference type="BioCyc" id="MetaCyc:PKI-MONOMER"/>
<dbReference type="SABIO-RK" id="P0AD61"/>
<dbReference type="UniPathway" id="UPA00109">
    <property type="reaction ID" value="UER00188"/>
</dbReference>
<dbReference type="EvolutionaryTrace" id="P0AD61"/>
<dbReference type="PRO" id="PR:P0AD61"/>
<dbReference type="Proteomes" id="UP000000625">
    <property type="component" value="Chromosome"/>
</dbReference>
<dbReference type="GO" id="GO:0005737">
    <property type="term" value="C:cytoplasm"/>
    <property type="evidence" value="ECO:0000318"/>
    <property type="project" value="GO_Central"/>
</dbReference>
<dbReference type="GO" id="GO:0005829">
    <property type="term" value="C:cytosol"/>
    <property type="evidence" value="ECO:0000314"/>
    <property type="project" value="EcoCyc"/>
</dbReference>
<dbReference type="GO" id="GO:0016020">
    <property type="term" value="C:membrane"/>
    <property type="evidence" value="ECO:0007005"/>
    <property type="project" value="UniProtKB"/>
</dbReference>
<dbReference type="GO" id="GO:1902912">
    <property type="term" value="C:pyruvate kinase complex"/>
    <property type="evidence" value="ECO:0000314"/>
    <property type="project" value="EcoCyc"/>
</dbReference>
<dbReference type="GO" id="GO:0005524">
    <property type="term" value="F:ATP binding"/>
    <property type="evidence" value="ECO:0007669"/>
    <property type="project" value="UniProtKB-KW"/>
</dbReference>
<dbReference type="GO" id="GO:0042802">
    <property type="term" value="F:identical protein binding"/>
    <property type="evidence" value="ECO:0000353"/>
    <property type="project" value="IntAct"/>
</dbReference>
<dbReference type="GO" id="GO:0016301">
    <property type="term" value="F:kinase activity"/>
    <property type="evidence" value="ECO:0007669"/>
    <property type="project" value="UniProtKB-KW"/>
</dbReference>
<dbReference type="GO" id="GO:0000287">
    <property type="term" value="F:magnesium ion binding"/>
    <property type="evidence" value="ECO:0007669"/>
    <property type="project" value="InterPro"/>
</dbReference>
<dbReference type="GO" id="GO:0030955">
    <property type="term" value="F:potassium ion binding"/>
    <property type="evidence" value="ECO:0007669"/>
    <property type="project" value="InterPro"/>
</dbReference>
<dbReference type="GO" id="GO:0004743">
    <property type="term" value="F:pyruvate kinase activity"/>
    <property type="evidence" value="ECO:0000314"/>
    <property type="project" value="EcoCyc"/>
</dbReference>
<dbReference type="GO" id="GO:0006096">
    <property type="term" value="P:glycolytic process"/>
    <property type="evidence" value="ECO:0000269"/>
    <property type="project" value="EcoCyc"/>
</dbReference>
<dbReference type="GO" id="GO:0009408">
    <property type="term" value="P:response to heat"/>
    <property type="evidence" value="ECO:0000315"/>
    <property type="project" value="EcoCyc"/>
</dbReference>
<dbReference type="CDD" id="cd00288">
    <property type="entry name" value="Pyruvate_Kinase"/>
    <property type="match status" value="1"/>
</dbReference>
<dbReference type="FunFam" id="2.40.33.10:FF:000001">
    <property type="entry name" value="Pyruvate kinase"/>
    <property type="match status" value="1"/>
</dbReference>
<dbReference type="FunFam" id="3.20.20.60:FF:000001">
    <property type="entry name" value="Pyruvate kinase"/>
    <property type="match status" value="1"/>
</dbReference>
<dbReference type="FunFam" id="3.40.1380.20:FF:000003">
    <property type="entry name" value="Pyruvate kinase"/>
    <property type="match status" value="1"/>
</dbReference>
<dbReference type="Gene3D" id="3.20.20.60">
    <property type="entry name" value="Phosphoenolpyruvate-binding domains"/>
    <property type="match status" value="1"/>
</dbReference>
<dbReference type="Gene3D" id="2.40.33.10">
    <property type="entry name" value="PK beta-barrel domain-like"/>
    <property type="match status" value="1"/>
</dbReference>
<dbReference type="Gene3D" id="3.40.1380.20">
    <property type="entry name" value="Pyruvate kinase, C-terminal domain"/>
    <property type="match status" value="1"/>
</dbReference>
<dbReference type="InterPro" id="IPR001697">
    <property type="entry name" value="Pyr_Knase"/>
</dbReference>
<dbReference type="InterPro" id="IPR015813">
    <property type="entry name" value="Pyrv/PenolPyrv_kinase-like_dom"/>
</dbReference>
<dbReference type="InterPro" id="IPR040442">
    <property type="entry name" value="Pyrv_kinase-like_dom_sf"/>
</dbReference>
<dbReference type="InterPro" id="IPR011037">
    <property type="entry name" value="Pyrv_Knase-like_insert_dom_sf"/>
</dbReference>
<dbReference type="InterPro" id="IPR018209">
    <property type="entry name" value="Pyrv_Knase_AS"/>
</dbReference>
<dbReference type="InterPro" id="IPR015793">
    <property type="entry name" value="Pyrv_Knase_brl"/>
</dbReference>
<dbReference type="InterPro" id="IPR015795">
    <property type="entry name" value="Pyrv_Knase_C"/>
</dbReference>
<dbReference type="InterPro" id="IPR036918">
    <property type="entry name" value="Pyrv_Knase_C_sf"/>
</dbReference>
<dbReference type="InterPro" id="IPR015806">
    <property type="entry name" value="Pyrv_Knase_insert_dom_sf"/>
</dbReference>
<dbReference type="NCBIfam" id="NF004491">
    <property type="entry name" value="PRK05826.1"/>
    <property type="match status" value="1"/>
</dbReference>
<dbReference type="NCBIfam" id="NF004978">
    <property type="entry name" value="PRK06354.1"/>
    <property type="match status" value="1"/>
</dbReference>
<dbReference type="NCBIfam" id="NF006664">
    <property type="entry name" value="PRK09206.1"/>
    <property type="match status" value="1"/>
</dbReference>
<dbReference type="NCBIfam" id="TIGR01064">
    <property type="entry name" value="pyruv_kin"/>
    <property type="match status" value="1"/>
</dbReference>
<dbReference type="PANTHER" id="PTHR11817">
    <property type="entry name" value="PYRUVATE KINASE"/>
    <property type="match status" value="1"/>
</dbReference>
<dbReference type="Pfam" id="PF00224">
    <property type="entry name" value="PK"/>
    <property type="match status" value="1"/>
</dbReference>
<dbReference type="Pfam" id="PF02887">
    <property type="entry name" value="PK_C"/>
    <property type="match status" value="1"/>
</dbReference>
<dbReference type="PRINTS" id="PR01050">
    <property type="entry name" value="PYRUVTKNASE"/>
</dbReference>
<dbReference type="SUPFAM" id="SSF51621">
    <property type="entry name" value="Phosphoenolpyruvate/pyruvate domain"/>
    <property type="match status" value="1"/>
</dbReference>
<dbReference type="SUPFAM" id="SSF50800">
    <property type="entry name" value="PK beta-barrel domain-like"/>
    <property type="match status" value="1"/>
</dbReference>
<dbReference type="SUPFAM" id="SSF52935">
    <property type="entry name" value="PK C-terminal domain-like"/>
    <property type="match status" value="1"/>
</dbReference>
<dbReference type="PROSITE" id="PS00110">
    <property type="entry name" value="PYRUVATE_KINASE"/>
    <property type="match status" value="1"/>
</dbReference>
<gene>
    <name type="primary">pykF</name>
    <name type="ordered locus">b1676</name>
    <name type="ordered locus">JW1666</name>
</gene>
<protein>
    <recommendedName>
        <fullName>Pyruvate kinase I</fullName>
        <ecNumber evidence="8">2.7.1.40</ecNumber>
    </recommendedName>
    <alternativeName>
        <fullName>PK-1</fullName>
    </alternativeName>
</protein>
<reference key="1">
    <citation type="journal article" date="1989" name="Proc. Natl. Acad. Sci. U.S.A.">
        <title>Direct genomic sequencing of bacterial DNA: the pyruvate kinase I gene of Escherichia coli.</title>
        <authorList>
            <person name="Ohara O."/>
            <person name="Dorit R.L."/>
            <person name="Gilbert W."/>
        </authorList>
    </citation>
    <scope>NUCLEOTIDE SEQUENCE [GENOMIC DNA]</scope>
</reference>
<reference key="2">
    <citation type="journal article" date="1997" name="J. Bacteriol.">
        <title>Analysis of the boundaries of Salmonella pathogenicity island 2 and the corresponding chromosomal region of Escherichia coli K-12.</title>
        <authorList>
            <person name="Hensel M."/>
            <person name="Shea J.E."/>
            <person name="Baeumler A.J."/>
            <person name="Gleeson C."/>
            <person name="Blattner F.R."/>
            <person name="Holden D.W."/>
        </authorList>
    </citation>
    <scope>NUCLEOTIDE SEQUENCE [GENOMIC DNA]</scope>
    <source>
        <strain>K12</strain>
    </source>
</reference>
<reference key="3">
    <citation type="journal article" date="1996" name="DNA Res.">
        <title>A 570-kb DNA sequence of the Escherichia coli K-12 genome corresponding to the 28.0-40.1 min region on the linkage map.</title>
        <authorList>
            <person name="Aiba H."/>
            <person name="Baba T."/>
            <person name="Fujita K."/>
            <person name="Hayashi K."/>
            <person name="Inada T."/>
            <person name="Isono K."/>
            <person name="Itoh T."/>
            <person name="Kasai H."/>
            <person name="Kashimoto K."/>
            <person name="Kimura S."/>
            <person name="Kitakawa M."/>
            <person name="Kitagawa M."/>
            <person name="Makino K."/>
            <person name="Miki T."/>
            <person name="Mizobuchi K."/>
            <person name="Mori H."/>
            <person name="Mori T."/>
            <person name="Motomura K."/>
            <person name="Nakade S."/>
            <person name="Nakamura Y."/>
            <person name="Nashimoto H."/>
            <person name="Nishio Y."/>
            <person name="Oshima T."/>
            <person name="Saito N."/>
            <person name="Sampei G."/>
            <person name="Seki Y."/>
            <person name="Sivasundaram S."/>
            <person name="Tagami H."/>
            <person name="Takeda J."/>
            <person name="Takemoto K."/>
            <person name="Takeuchi Y."/>
            <person name="Wada C."/>
            <person name="Yamamoto Y."/>
            <person name="Horiuchi T."/>
        </authorList>
    </citation>
    <scope>NUCLEOTIDE SEQUENCE [LARGE SCALE GENOMIC DNA]</scope>
    <source>
        <strain>K12 / W3110 / ATCC 27325 / DSM 5911</strain>
    </source>
</reference>
<reference key="4">
    <citation type="journal article" date="1997" name="Science">
        <title>The complete genome sequence of Escherichia coli K-12.</title>
        <authorList>
            <person name="Blattner F.R."/>
            <person name="Plunkett G. III"/>
            <person name="Bloch C.A."/>
            <person name="Perna N.T."/>
            <person name="Burland V."/>
            <person name="Riley M."/>
            <person name="Collado-Vides J."/>
            <person name="Glasner J.D."/>
            <person name="Rode C.K."/>
            <person name="Mayhew G.F."/>
            <person name="Gregor J."/>
            <person name="Davis N.W."/>
            <person name="Kirkpatrick H.A."/>
            <person name="Goeden M.A."/>
            <person name="Rose D.J."/>
            <person name="Mau B."/>
            <person name="Shao Y."/>
        </authorList>
    </citation>
    <scope>NUCLEOTIDE SEQUENCE [LARGE SCALE GENOMIC DNA]</scope>
    <source>
        <strain>K12 / MG1655 / ATCC 47076</strain>
    </source>
</reference>
<reference key="5">
    <citation type="journal article" date="2006" name="Mol. Syst. Biol.">
        <title>Highly accurate genome sequences of Escherichia coli K-12 strains MG1655 and W3110.</title>
        <authorList>
            <person name="Hayashi K."/>
            <person name="Morooka N."/>
            <person name="Yamamoto Y."/>
            <person name="Fujita K."/>
            <person name="Isono K."/>
            <person name="Choi S."/>
            <person name="Ohtsubo E."/>
            <person name="Baba T."/>
            <person name="Wanner B.L."/>
            <person name="Mori H."/>
            <person name="Horiuchi T."/>
        </authorList>
    </citation>
    <scope>NUCLEOTIDE SEQUENCE [LARGE SCALE GENOMIC DNA]</scope>
    <scope>SEQUENCE REVISION TO 451-470</scope>
    <source>
        <strain>K12 / W3110 / ATCC 27325 / DSM 5911</strain>
    </source>
</reference>
<reference key="6">
    <citation type="journal article" date="1991" name="Biol. Chem. Hoppe-Seyler">
        <title>Bacterial pyruvate kinases have a shorter N-terminal domain.</title>
        <authorList>
            <person name="Valentini G."/>
            <person name="Stoppini M."/>
            <person name="Speranza M.L."/>
            <person name="Malcovati M."/>
            <person name="Ferri G."/>
        </authorList>
    </citation>
    <scope>PROTEIN SEQUENCE OF 1-48</scope>
</reference>
<reference key="7">
    <citation type="journal article" date="1997" name="Electrophoresis">
        <title>Comparing the predicted and observed properties of proteins encoded in the genome of Escherichia coli K-12.</title>
        <authorList>
            <person name="Link A.J."/>
            <person name="Robison K."/>
            <person name="Church G.M."/>
        </authorList>
    </citation>
    <scope>PROTEIN SEQUENCE OF 1-11</scope>
    <source>
        <strain>K12 / EMG2</strain>
    </source>
</reference>
<reference key="8">
    <citation type="journal article" date="1989" name="Biol. Chem. Hoppe-Seyler">
        <title>Primary structure of three peptides at the catalytic and allosteric sites of the fructose-1,6-bisphosphate-activated pyruvate kinase from Escherichia coli.</title>
        <authorList>
            <person name="Speranza M.L."/>
            <person name="Valentini G."/>
            <person name="Iadarola P."/>
            <person name="Stoppini M."/>
            <person name="Malcovati M."/>
            <person name="Ferri G."/>
        </authorList>
    </citation>
    <scope>PROTEIN SEQUENCE OF 293-319; 369-385 AND 389-404</scope>
</reference>
<reference key="9">
    <citation type="journal article" date="1980" name="Biochem. J.">
        <title>Analysis of progress curves. Rate law of pyruvate kinase type I from Escherichia coli.</title>
        <authorList>
            <person name="Markus M."/>
            <person name="Plesser T."/>
            <person name="Boiteux A."/>
            <person name="Hess B."/>
            <person name="Malcovati M."/>
        </authorList>
    </citation>
    <scope>CATALYTIC ACTIVITY</scope>
    <scope>MAGNESIUM COFACTOR</scope>
    <scope>ACTIVITY REGULATION</scope>
    <source>
        <strain>K12</strain>
    </source>
</reference>
<reference key="10">
    <citation type="journal article" date="1997" name="Electrophoresis">
        <title>Escherichia coli proteome analysis using the gene-protein database.</title>
        <authorList>
            <person name="VanBogelen R.A."/>
            <person name="Abshire K.Z."/>
            <person name="Moldover B."/>
            <person name="Olson E.R."/>
            <person name="Neidhardt F.C."/>
        </authorList>
    </citation>
    <scope>IDENTIFICATION BY 2D-GEL</scope>
</reference>
<reference key="11">
    <citation type="journal article" date="2009" name="Mol. Cell. Proteomics">
        <title>Lysine acetylation is a highly abundant and evolutionarily conserved modification in Escherichia coli.</title>
        <authorList>
            <person name="Zhang J."/>
            <person name="Sprung R."/>
            <person name="Pei J."/>
            <person name="Tan X."/>
            <person name="Kim S."/>
            <person name="Zhu H."/>
            <person name="Liu C.F."/>
            <person name="Grishin N.V."/>
            <person name="Zhao Y."/>
        </authorList>
    </citation>
    <scope>ACETYLATION [LARGE SCALE ANALYSIS] AT LYS-76 AND LYS-319</scope>
    <scope>IDENTIFICATION BY MASS SPECTROMETRY</scope>
    <source>
        <strain>K12 / JW1106</strain>
        <strain>K12 / MG1655 / ATCC 47076</strain>
    </source>
</reference>
<reference evidence="15" key="12">
    <citation type="journal article" date="1995" name="Structure">
        <title>Crystal structure of Escherichia coli pyruvate kinase type I: molecular basis of the allosteric transition.</title>
        <authorList>
            <person name="Mattevi A."/>
            <person name="Valentini G."/>
            <person name="Rizzi M."/>
            <person name="Speranza M.L."/>
            <person name="Bolognesi M."/>
            <person name="Coda A."/>
        </authorList>
    </citation>
    <scope>X-RAY CRYSTALLOGRAPHY (2.5 ANGSTROMS) OF THE INACTIVE T-STATE</scope>
    <scope>FUNCTION</scope>
    <scope>SUBUNIT</scope>
</reference>
<reference evidence="13 14" key="13">
    <citation type="journal article" date="2000" name="J. Biol. Chem.">
        <title>The allosteric regulation of pyruvate kinase.</title>
        <authorList>
            <person name="Valentini G."/>
            <person name="Chiarelli L."/>
            <person name="Fortin R."/>
            <person name="Speranza M.L."/>
            <person name="Galizzi A."/>
            <person name="Mattevi A."/>
        </authorList>
    </citation>
    <scope>X-RAY CRYSTALLOGRAPHY (1.8 ANGSTROMS) OF MUTANT ENZYMES</scope>
    <scope>FUNCTION</scope>
    <scope>SUBUNIT</scope>
    <scope>MUTAGENESIS OF ARG-271; ARG-292; ASP-297; LYS-382; LYS-413 AND ARG-431</scope>
</reference>
<reference evidence="16" key="14">
    <citation type="journal article" date="2016" name="Acta Crystallogr. D">
        <title>Grappling with anisotropic data, pseudo-merohedral twinning and pseudo-translational noncrystallographic symmetry: a case study involving pyruvate kinase.</title>
        <authorList>
            <person name="Donovan K.A."/>
            <person name="Atkinson S.C."/>
            <person name="Kessans S.A."/>
            <person name="Peng F."/>
            <person name="Cooper T.F."/>
            <person name="Griffin M.D."/>
            <person name="Jameson G.B."/>
            <person name="Dobson R.C."/>
        </authorList>
    </citation>
    <scope>X-RAY CRYSTALLOGRAPHY (2.28 ANGSTROMS)</scope>
    <scope>SUBUNIT</scope>
</reference>
<name>KPYK1_ECOLI</name>
<sequence>MKKTKIVCTIGPKTESEEMLAKMLDAGMNVMRLNFSHGDYAEHGQRIQNLRNVMSKTGKTAAILLDTKGPEIRTMKLEGGNDVSLKAGQTFTFTTDKSVIGNSEMVAVTYEGFTTDLSVGNTVLVDDGLIGMEVTAIEGNKVICKVLNNGDLGENKGVNLPGVSIALPALAEKDKQDLIFGCEQGVDFVAASFIRKRSDVIEIREHLKAHGGENIHIISKIENQEGLNNFDEILEASDGIMVARGDLGVEIPVEEVIFAQKMMIEKCIRARKVVITATQMLDSMIKNPRPTRAEAGDVANAILDGTDAVMLSGESAKGKYPLEAVSIMATICERTDRVMNSRLEFNNDNRKLRITEAVCRGAVETAEKLDAPLIVVATQGGKSARAVRKYFPDATILALTTNEKTAHQLVLSKGVVPQLVKEITSTDDFYRLGKELALQSGLAHKGDVVVMVSGALVPSGTTNTASVHVL</sequence>
<evidence type="ECO:0000250" key="1">
    <source>
        <dbReference type="UniProtKB" id="P00549"/>
    </source>
</evidence>
<evidence type="ECO:0000250" key="2">
    <source>
        <dbReference type="UniProtKB" id="P14618"/>
    </source>
</evidence>
<evidence type="ECO:0000250" key="3">
    <source>
        <dbReference type="UniProtKB" id="P30613"/>
    </source>
</evidence>
<evidence type="ECO:0000250" key="4">
    <source>
        <dbReference type="UniProtKB" id="Q02499"/>
    </source>
</evidence>
<evidence type="ECO:0000269" key="5">
    <source>
    </source>
</evidence>
<evidence type="ECO:0000269" key="6">
    <source>
    </source>
</evidence>
<evidence type="ECO:0000269" key="7">
    <source>
    </source>
</evidence>
<evidence type="ECO:0000269" key="8">
    <source>
    </source>
</evidence>
<evidence type="ECO:0000269" key="9">
    <source>
    </source>
</evidence>
<evidence type="ECO:0000305" key="10"/>
<evidence type="ECO:0000305" key="11">
    <source>
    </source>
</evidence>
<evidence type="ECO:0000305" key="12">
    <source>
    </source>
</evidence>
<evidence type="ECO:0007744" key="13">
    <source>
        <dbReference type="PDB" id="1E0T"/>
    </source>
</evidence>
<evidence type="ECO:0007744" key="14">
    <source>
        <dbReference type="PDB" id="1E0U"/>
    </source>
</evidence>
<evidence type="ECO:0007744" key="15">
    <source>
        <dbReference type="PDB" id="1PKY"/>
    </source>
</evidence>
<evidence type="ECO:0007744" key="16">
    <source>
        <dbReference type="PDB" id="4YNG"/>
    </source>
</evidence>
<evidence type="ECO:0007829" key="17">
    <source>
        <dbReference type="PDB" id="1E0T"/>
    </source>
</evidence>
<evidence type="ECO:0007829" key="18">
    <source>
        <dbReference type="PDB" id="1PKY"/>
    </source>
</evidence>
<evidence type="ECO:0007829" key="19">
    <source>
        <dbReference type="PDB" id="8EDS"/>
    </source>
</evidence>
<evidence type="ECO:0007829" key="20">
    <source>
        <dbReference type="PDB" id="8EQ3"/>
    </source>
</evidence>
<proteinExistence type="evidence at protein level"/>
<feature type="chain" id="PRO_0000112069" description="Pyruvate kinase I">
    <location>
        <begin position="1"/>
        <end position="470"/>
    </location>
</feature>
<feature type="binding site" evidence="3">
    <location>
        <position position="32"/>
    </location>
    <ligand>
        <name>substrate</name>
    </ligand>
</feature>
<feature type="binding site" evidence="2">
    <location>
        <begin position="34"/>
        <end position="37"/>
    </location>
    <ligand>
        <name>ATP</name>
        <dbReference type="ChEBI" id="CHEBI:30616"/>
    </ligand>
</feature>
<feature type="binding site" evidence="3">
    <location>
        <position position="34"/>
    </location>
    <ligand>
        <name>K(+)</name>
        <dbReference type="ChEBI" id="CHEBI:29103"/>
    </ligand>
</feature>
<feature type="binding site" evidence="3">
    <location>
        <position position="36"/>
    </location>
    <ligand>
        <name>K(+)</name>
        <dbReference type="ChEBI" id="CHEBI:29103"/>
    </ligand>
</feature>
<feature type="binding site" evidence="3">
    <location>
        <position position="66"/>
    </location>
    <ligand>
        <name>K(+)</name>
        <dbReference type="ChEBI" id="CHEBI:29103"/>
    </ligand>
</feature>
<feature type="binding site" evidence="3">
    <location>
        <position position="67"/>
    </location>
    <ligand>
        <name>K(+)</name>
        <dbReference type="ChEBI" id="CHEBI:29103"/>
    </ligand>
</feature>
<feature type="binding site" evidence="2">
    <location>
        <position position="73"/>
    </location>
    <ligand>
        <name>ATP</name>
        <dbReference type="ChEBI" id="CHEBI:30616"/>
    </ligand>
</feature>
<feature type="binding site" evidence="2">
    <location>
        <position position="156"/>
    </location>
    <ligand>
        <name>ATP</name>
        <dbReference type="ChEBI" id="CHEBI:30616"/>
    </ligand>
</feature>
<feature type="binding site" evidence="3">
    <location>
        <position position="220"/>
    </location>
    <ligand>
        <name>substrate</name>
    </ligand>
</feature>
<feature type="binding site" evidence="3">
    <location>
        <position position="222"/>
    </location>
    <ligand>
        <name>Mg(2+)</name>
        <dbReference type="ChEBI" id="CHEBI:18420"/>
    </ligand>
</feature>
<feature type="binding site" evidence="3">
    <location>
        <position position="245"/>
    </location>
    <ligand>
        <name>substrate</name>
    </ligand>
</feature>
<feature type="binding site" evidence="3">
    <location>
        <position position="246"/>
    </location>
    <ligand>
        <name>Mg(2+)</name>
        <dbReference type="ChEBI" id="CHEBI:18420"/>
    </ligand>
</feature>
<feature type="binding site" evidence="3">
    <location>
        <position position="246"/>
    </location>
    <ligand>
        <name>substrate</name>
    </ligand>
</feature>
<feature type="binding site" evidence="3">
    <location>
        <position position="278"/>
    </location>
    <ligand>
        <name>substrate</name>
    </ligand>
</feature>
<feature type="site" description="Transition state stabilizer" evidence="1">
    <location>
        <position position="220"/>
    </location>
</feature>
<feature type="modified residue" description="N6-acetyllysine" evidence="6">
    <location>
        <position position="76"/>
    </location>
</feature>
<feature type="modified residue" description="N6-acetyllysine" evidence="6">
    <location>
        <position position="319"/>
    </location>
</feature>
<feature type="mutagenesis site" description="Loss of an interdomain salt bridge, stablilizes the inactive T-state." evidence="5">
    <original>R</original>
    <variation>L</variation>
    <location>
        <position position="271"/>
    </location>
</feature>
<feature type="mutagenesis site" description="Inactive, crystallizes in the inactive form." evidence="5">
    <original>R</original>
    <variation>D</variation>
    <location>
        <position position="292"/>
    </location>
</feature>
<feature type="mutagenesis site" description="Inactive." evidence="5">
    <original>D</original>
    <variation>R</variation>
    <location>
        <position position="297"/>
    </location>
</feature>
<feature type="mutagenesis site" description="Significant loss of activation by fructose 1,6-bisphosphate, retains sigmoidal kinetics." evidence="5">
    <original>K</original>
    <variation>Q</variation>
    <location>
        <position position="382"/>
    </location>
</feature>
<feature type="mutagenesis site" description="Partial activation of enzyme, loss of cooperativity in fructose 1,6-bisphosphate binding." evidence="5">
    <original>K</original>
    <variation>Q</variation>
    <location>
        <position position="413"/>
    </location>
</feature>
<feature type="mutagenesis site" description="Partial activation." evidence="5">
    <original>R</original>
    <variation>E</variation>
    <location>
        <position position="431"/>
    </location>
</feature>
<feature type="sequence conflict" description="In Ref. 6; AA sequence." evidence="10" ref="6">
    <original>G</original>
    <variation>S</variation>
    <location>
        <position position="44"/>
    </location>
</feature>
<feature type="sequence conflict" description="In Ref. 8; AA sequence." evidence="10" ref="8">
    <original>Q</original>
    <variation>N</variation>
    <location>
        <position position="379"/>
    </location>
</feature>
<feature type="sequence conflict" description="In Ref. 8; AA sequence." evidence="10" ref="8">
    <original>T</original>
    <variation>D</variation>
    <location>
        <position position="401"/>
    </location>
</feature>
<feature type="sequence conflict" description="In Ref. 1; AAA24392." evidence="10" ref="1">
    <original>MVSGALVPSGTTNTASVHVL</original>
    <variation>YGFWCTGTERHY</variation>
    <location>
        <begin position="451"/>
        <end position="470"/>
    </location>
</feature>
<feature type="strand" evidence="17">
    <location>
        <begin position="4"/>
        <end position="9"/>
    </location>
</feature>
<feature type="helix" evidence="17">
    <location>
        <begin position="12"/>
        <end position="14"/>
    </location>
</feature>
<feature type="helix" evidence="17">
    <location>
        <begin position="17"/>
        <end position="26"/>
    </location>
</feature>
<feature type="strand" evidence="17">
    <location>
        <begin position="28"/>
        <end position="34"/>
    </location>
</feature>
<feature type="helix" evidence="17">
    <location>
        <begin position="40"/>
        <end position="57"/>
    </location>
</feature>
<feature type="strand" evidence="17">
    <location>
        <begin position="62"/>
        <end position="66"/>
    </location>
</feature>
<feature type="strand" evidence="17">
    <location>
        <begin position="72"/>
        <end position="74"/>
    </location>
</feature>
<feature type="helix" evidence="17">
    <location>
        <begin position="78"/>
        <end position="80"/>
    </location>
</feature>
<feature type="strand" evidence="17">
    <location>
        <begin position="83"/>
        <end position="85"/>
    </location>
</feature>
<feature type="strand" evidence="17">
    <location>
        <begin position="90"/>
        <end position="95"/>
    </location>
</feature>
<feature type="strand" evidence="17">
    <location>
        <begin position="105"/>
        <end position="109"/>
    </location>
</feature>
<feature type="helix" evidence="17">
    <location>
        <begin position="113"/>
        <end position="116"/>
    </location>
</feature>
<feature type="strand" evidence="17">
    <location>
        <begin position="122"/>
        <end position="125"/>
    </location>
</feature>
<feature type="turn" evidence="17">
    <location>
        <begin position="126"/>
        <end position="129"/>
    </location>
</feature>
<feature type="strand" evidence="17">
    <location>
        <begin position="130"/>
        <end position="138"/>
    </location>
</feature>
<feature type="strand" evidence="17">
    <location>
        <begin position="141"/>
        <end position="146"/>
    </location>
</feature>
<feature type="strand" evidence="17">
    <location>
        <begin position="150"/>
        <end position="152"/>
    </location>
</feature>
<feature type="strand" evidence="17">
    <location>
        <begin position="157"/>
        <end position="159"/>
    </location>
</feature>
<feature type="helix" evidence="17">
    <location>
        <begin position="172"/>
        <end position="184"/>
    </location>
</feature>
<feature type="strand" evidence="17">
    <location>
        <begin position="187"/>
        <end position="193"/>
    </location>
</feature>
<feature type="helix" evidence="17">
    <location>
        <begin position="197"/>
        <end position="208"/>
    </location>
</feature>
<feature type="turn" evidence="17">
    <location>
        <begin position="209"/>
        <end position="211"/>
    </location>
</feature>
<feature type="strand" evidence="17">
    <location>
        <begin position="216"/>
        <end position="221"/>
    </location>
</feature>
<feature type="helix" evidence="17">
    <location>
        <begin position="224"/>
        <end position="228"/>
    </location>
</feature>
<feature type="helix" evidence="17">
    <location>
        <begin position="230"/>
        <end position="236"/>
    </location>
</feature>
<feature type="strand" evidence="17">
    <location>
        <begin position="237"/>
        <end position="243"/>
    </location>
</feature>
<feature type="helix" evidence="17">
    <location>
        <begin position="244"/>
        <end position="250"/>
    </location>
</feature>
<feature type="helix" evidence="17">
    <location>
        <begin position="253"/>
        <end position="270"/>
    </location>
</feature>
<feature type="strand" evidence="17">
    <location>
        <begin position="273"/>
        <end position="277"/>
    </location>
</feature>
<feature type="strand" evidence="18">
    <location>
        <begin position="278"/>
        <end position="281"/>
    </location>
</feature>
<feature type="helix" evidence="20">
    <location>
        <begin position="282"/>
        <end position="285"/>
    </location>
</feature>
<feature type="helix" evidence="17">
    <location>
        <begin position="292"/>
        <end position="304"/>
    </location>
</feature>
<feature type="strand" evidence="17">
    <location>
        <begin position="307"/>
        <end position="311"/>
    </location>
</feature>
<feature type="helix" evidence="20">
    <location>
        <begin position="313"/>
        <end position="316"/>
    </location>
</feature>
<feature type="helix" evidence="17">
    <location>
        <begin position="322"/>
        <end position="336"/>
    </location>
</feature>
<feature type="helix" evidence="19">
    <location>
        <begin position="350"/>
        <end position="352"/>
    </location>
</feature>
<feature type="helix" evidence="17">
    <location>
        <begin position="355"/>
        <end position="368"/>
    </location>
</feature>
<feature type="strand" evidence="17">
    <location>
        <begin position="372"/>
        <end position="377"/>
    </location>
</feature>
<feature type="strand" evidence="17">
    <location>
        <begin position="379"/>
        <end position="381"/>
    </location>
</feature>
<feature type="helix" evidence="17">
    <location>
        <begin position="382"/>
        <end position="388"/>
    </location>
</feature>
<feature type="strand" evidence="17">
    <location>
        <begin position="393"/>
        <end position="401"/>
    </location>
</feature>
<feature type="helix" evidence="17">
    <location>
        <begin position="403"/>
        <end position="408"/>
    </location>
</feature>
<feature type="helix" evidence="17">
    <location>
        <begin position="409"/>
        <end position="411"/>
    </location>
</feature>
<feature type="strand" evidence="17">
    <location>
        <begin position="415"/>
        <end position="419"/>
    </location>
</feature>
<feature type="helix" evidence="17">
    <location>
        <begin position="426"/>
        <end position="439"/>
    </location>
</feature>
<feature type="strand" evidence="17">
    <location>
        <begin position="441"/>
        <end position="443"/>
    </location>
</feature>
<feature type="strand" evidence="17">
    <location>
        <begin position="448"/>
        <end position="453"/>
    </location>
</feature>
<feature type="strand" evidence="17">
    <location>
        <begin position="455"/>
        <end position="457"/>
    </location>
</feature>
<feature type="strand" evidence="17">
    <location>
        <begin position="464"/>
        <end position="469"/>
    </location>
</feature>
<accession>P0AD61</accession>
<accession>P14178</accession>
<accession>P76921</accession>
<accession>P78165</accession>
<accession>P78231</accession>